<comment type="function">
    <text>Converts the preformed base xanthine, a product of nucleic acid breakdown, to xanthosine 5'-monophosphate (XMP), so that it can be reused for RNA or DNA synthesis.</text>
</comment>
<comment type="catalytic activity">
    <reaction>
        <text>XMP + diphosphate = xanthine + 5-phospho-alpha-D-ribose 1-diphosphate</text>
        <dbReference type="Rhea" id="RHEA:10800"/>
        <dbReference type="ChEBI" id="CHEBI:17712"/>
        <dbReference type="ChEBI" id="CHEBI:33019"/>
        <dbReference type="ChEBI" id="CHEBI:57464"/>
        <dbReference type="ChEBI" id="CHEBI:58017"/>
        <dbReference type="EC" id="2.4.2.22"/>
    </reaction>
</comment>
<comment type="biophysicochemical properties">
    <kinetics>
        <KM evidence="1">2.2 uM for xanthine</KM>
        <KM evidence="1">281 uM for guanine</KM>
        <KM evidence="1">1250 uM for hypoxanthine</KM>
    </kinetics>
    <phDependence>
        <text evidence="1">Optimum pH is 6-9.</text>
    </phDependence>
</comment>
<comment type="pathway">
    <text>Purine metabolism; XMP biosynthesis via salvage pathway; XMP from xanthine: step 1/1.</text>
</comment>
<comment type="subunit">
    <text evidence="1 3">Homodimer.</text>
</comment>
<comment type="subcellular location">
    <subcellularLocation>
        <location evidence="4">Cytoplasm</location>
    </subcellularLocation>
</comment>
<comment type="induction">
    <text evidence="2">Repressed during growth on purines as a nitrogen source.</text>
</comment>
<comment type="miscellaneous">
    <text>Highly specific for xanthine, with a strong discrimination against hypoxanthine and guanine as substrates.</text>
</comment>
<comment type="similarity">
    <text evidence="4">Belongs to the purine/pyrimidine phosphoribosyltransferase family. Xpt subfamily.</text>
</comment>
<organism>
    <name type="scientific">Bacillus subtilis (strain 168)</name>
    <dbReference type="NCBI Taxonomy" id="224308"/>
    <lineage>
        <taxon>Bacteria</taxon>
        <taxon>Bacillati</taxon>
        <taxon>Bacillota</taxon>
        <taxon>Bacilli</taxon>
        <taxon>Bacillales</taxon>
        <taxon>Bacillaceae</taxon>
        <taxon>Bacillus</taxon>
    </lineage>
</organism>
<reference key="1">
    <citation type="journal article" date="1997" name="J. Bacteriol.">
        <title>Xanthine metabolism in Bacillus subtilis: characterization of the xpt-pbuX operon and evidence for purine- and nitrogen-controlled expression of genes involved in xanthine salvage and catabolism.</title>
        <authorList>
            <person name="Christiansen L.C."/>
            <person name="Schou S."/>
            <person name="Nygaard P."/>
            <person name="Saxild H.H."/>
        </authorList>
    </citation>
    <scope>NUCLEOTIDE SEQUENCE [GENOMIC DNA]</scope>
    <scope>INDUCTION</scope>
    <source>
        <strain>168</strain>
    </source>
</reference>
<reference key="2">
    <citation type="journal article" date="1996" name="Microbiology">
        <title>Organization of the Bacillus subtilis 168 chromosome between kdg and the attachment site of the SP beta prophage: use of long accurate PCR and yeast artificial chromosomes for sequencing.</title>
        <authorList>
            <person name="Capuano V."/>
            <person name="Galleron N."/>
            <person name="Pujic P."/>
            <person name="Sorokin A."/>
            <person name="Ehrlich S.D."/>
        </authorList>
    </citation>
    <scope>NUCLEOTIDE SEQUENCE [GENOMIC DNA]</scope>
    <source>
        <strain>168 / Marburg / ATCC 6051 / DSM 10 / JCM 1465 / NBRC 13719 / NCIMB 3610 / NRRL NRS-744 / VKM B-501</strain>
    </source>
</reference>
<reference key="3">
    <citation type="journal article" date="1997" name="Nature">
        <title>The complete genome sequence of the Gram-positive bacterium Bacillus subtilis.</title>
        <authorList>
            <person name="Kunst F."/>
            <person name="Ogasawara N."/>
            <person name="Moszer I."/>
            <person name="Albertini A.M."/>
            <person name="Alloni G."/>
            <person name="Azevedo V."/>
            <person name="Bertero M.G."/>
            <person name="Bessieres P."/>
            <person name="Bolotin A."/>
            <person name="Borchert S."/>
            <person name="Borriss R."/>
            <person name="Boursier L."/>
            <person name="Brans A."/>
            <person name="Braun M."/>
            <person name="Brignell S.C."/>
            <person name="Bron S."/>
            <person name="Brouillet S."/>
            <person name="Bruschi C.V."/>
            <person name="Caldwell B."/>
            <person name="Capuano V."/>
            <person name="Carter N.M."/>
            <person name="Choi S.-K."/>
            <person name="Codani J.-J."/>
            <person name="Connerton I.F."/>
            <person name="Cummings N.J."/>
            <person name="Daniel R.A."/>
            <person name="Denizot F."/>
            <person name="Devine K.M."/>
            <person name="Duesterhoeft A."/>
            <person name="Ehrlich S.D."/>
            <person name="Emmerson P.T."/>
            <person name="Entian K.-D."/>
            <person name="Errington J."/>
            <person name="Fabret C."/>
            <person name="Ferrari E."/>
            <person name="Foulger D."/>
            <person name="Fritz C."/>
            <person name="Fujita M."/>
            <person name="Fujita Y."/>
            <person name="Fuma S."/>
            <person name="Galizzi A."/>
            <person name="Galleron N."/>
            <person name="Ghim S.-Y."/>
            <person name="Glaser P."/>
            <person name="Goffeau A."/>
            <person name="Golightly E.J."/>
            <person name="Grandi G."/>
            <person name="Guiseppi G."/>
            <person name="Guy B.J."/>
            <person name="Haga K."/>
            <person name="Haiech J."/>
            <person name="Harwood C.R."/>
            <person name="Henaut A."/>
            <person name="Hilbert H."/>
            <person name="Holsappel S."/>
            <person name="Hosono S."/>
            <person name="Hullo M.-F."/>
            <person name="Itaya M."/>
            <person name="Jones L.-M."/>
            <person name="Joris B."/>
            <person name="Karamata D."/>
            <person name="Kasahara Y."/>
            <person name="Klaerr-Blanchard M."/>
            <person name="Klein C."/>
            <person name="Kobayashi Y."/>
            <person name="Koetter P."/>
            <person name="Koningstein G."/>
            <person name="Krogh S."/>
            <person name="Kumano M."/>
            <person name="Kurita K."/>
            <person name="Lapidus A."/>
            <person name="Lardinois S."/>
            <person name="Lauber J."/>
            <person name="Lazarevic V."/>
            <person name="Lee S.-M."/>
            <person name="Levine A."/>
            <person name="Liu H."/>
            <person name="Masuda S."/>
            <person name="Mauel C."/>
            <person name="Medigue C."/>
            <person name="Medina N."/>
            <person name="Mellado R.P."/>
            <person name="Mizuno M."/>
            <person name="Moestl D."/>
            <person name="Nakai S."/>
            <person name="Noback M."/>
            <person name="Noone D."/>
            <person name="O'Reilly M."/>
            <person name="Ogawa K."/>
            <person name="Ogiwara A."/>
            <person name="Oudega B."/>
            <person name="Park S.-H."/>
            <person name="Parro V."/>
            <person name="Pohl T.M."/>
            <person name="Portetelle D."/>
            <person name="Porwollik S."/>
            <person name="Prescott A.M."/>
            <person name="Presecan E."/>
            <person name="Pujic P."/>
            <person name="Purnelle B."/>
            <person name="Rapoport G."/>
            <person name="Rey M."/>
            <person name="Reynolds S."/>
            <person name="Rieger M."/>
            <person name="Rivolta C."/>
            <person name="Rocha E."/>
            <person name="Roche B."/>
            <person name="Rose M."/>
            <person name="Sadaie Y."/>
            <person name="Sato T."/>
            <person name="Scanlan E."/>
            <person name="Schleich S."/>
            <person name="Schroeter R."/>
            <person name="Scoffone F."/>
            <person name="Sekiguchi J."/>
            <person name="Sekowska A."/>
            <person name="Seror S.J."/>
            <person name="Serror P."/>
            <person name="Shin B.-S."/>
            <person name="Soldo B."/>
            <person name="Sorokin A."/>
            <person name="Tacconi E."/>
            <person name="Takagi T."/>
            <person name="Takahashi H."/>
            <person name="Takemaru K."/>
            <person name="Takeuchi M."/>
            <person name="Tamakoshi A."/>
            <person name="Tanaka T."/>
            <person name="Terpstra P."/>
            <person name="Tognoni A."/>
            <person name="Tosato V."/>
            <person name="Uchiyama S."/>
            <person name="Vandenbol M."/>
            <person name="Vannier F."/>
            <person name="Vassarotti A."/>
            <person name="Viari A."/>
            <person name="Wambutt R."/>
            <person name="Wedler E."/>
            <person name="Wedler H."/>
            <person name="Weitzenegger T."/>
            <person name="Winters P."/>
            <person name="Wipat A."/>
            <person name="Yamamoto H."/>
            <person name="Yamane K."/>
            <person name="Yasumoto K."/>
            <person name="Yata K."/>
            <person name="Yoshida K."/>
            <person name="Yoshikawa H.-F."/>
            <person name="Zumstein E."/>
            <person name="Yoshikawa H."/>
            <person name="Danchin A."/>
        </authorList>
    </citation>
    <scope>NUCLEOTIDE SEQUENCE [LARGE SCALE GENOMIC DNA]</scope>
    <source>
        <strain>168</strain>
    </source>
</reference>
<reference key="4">
    <citation type="submission" date="2005-02" db="PDB data bank">
        <title>Crystal structure of xanthine phosphoribosyltransferase from Bacillus subtilis.</title>
        <authorList>
            <consortium name="Midwest center for structural genomics (MCSG)"/>
        </authorList>
    </citation>
    <scope>X-RAY CRYSTALLOGRAPHY (1.8 ANGSTROMS) IN COMPLEX WITH GUANINE TETRAPHOSPHATE</scope>
</reference>
<reference key="5">
    <citation type="journal article" date="2006" name="Biochemistry">
        <title>The extraordinary specificity of xanthine phosphoribosyltransferase from Bacillus subtilis elucidated by reaction kinetics, ligand binding, and crystallography.</title>
        <authorList>
            <person name="Arent S."/>
            <person name="Kadziola A."/>
            <person name="Larsen S."/>
            <person name="Neuhard J."/>
            <person name="Jensen K.F."/>
        </authorList>
    </citation>
    <scope>X-RAY CRYSTALLOGRAPHY (2.05 ANGSTROMS) IN COMPLEX WITH GMP</scope>
    <scope>SUBUNIT</scope>
    <scope>BIOPHYSICOCHEMICAL PROPERTIES</scope>
    <source>
        <strain>168</strain>
    </source>
</reference>
<dbReference type="EC" id="2.4.2.22"/>
<dbReference type="EMBL" id="X83878">
    <property type="protein sequence ID" value="CAA58758.1"/>
    <property type="molecule type" value="Genomic_DNA"/>
</dbReference>
<dbReference type="EMBL" id="L77246">
    <property type="protein sequence ID" value="AAA96611.1"/>
    <property type="molecule type" value="Genomic_DNA"/>
</dbReference>
<dbReference type="EMBL" id="AL009126">
    <property type="protein sequence ID" value="CAB14124.1"/>
    <property type="molecule type" value="Genomic_DNA"/>
</dbReference>
<dbReference type="PIR" id="S51309">
    <property type="entry name" value="S51309"/>
</dbReference>
<dbReference type="RefSeq" id="NP_390089.1">
    <property type="nucleotide sequence ID" value="NC_000964.3"/>
</dbReference>
<dbReference type="RefSeq" id="WP_003230744.1">
    <property type="nucleotide sequence ID" value="NZ_OZ025638.1"/>
</dbReference>
<dbReference type="PDB" id="1Y0B">
    <property type="method" value="X-ray"/>
    <property type="resolution" value="1.80 A"/>
    <property type="chains" value="A/B/C/D=1-194"/>
</dbReference>
<dbReference type="PDB" id="2FXV">
    <property type="method" value="X-ray"/>
    <property type="resolution" value="2.05 A"/>
    <property type="chains" value="A/B=1-194"/>
</dbReference>
<dbReference type="PDB" id="6W1I">
    <property type="method" value="X-ray"/>
    <property type="resolution" value="1.80 A"/>
    <property type="chains" value="A/B/C/D=2-194"/>
</dbReference>
<dbReference type="PDBsum" id="1Y0B"/>
<dbReference type="PDBsum" id="2FXV"/>
<dbReference type="PDBsum" id="6W1I"/>
<dbReference type="SMR" id="P42085"/>
<dbReference type="FunCoup" id="P42085">
    <property type="interactions" value="93"/>
</dbReference>
<dbReference type="STRING" id="224308.BSU22070"/>
<dbReference type="DrugBank" id="DB04022">
    <property type="generic name" value="Guanosine tetraphosphate"/>
</dbReference>
<dbReference type="jPOST" id="P42085"/>
<dbReference type="PaxDb" id="224308-BSU22070"/>
<dbReference type="DNASU" id="939064"/>
<dbReference type="EnsemblBacteria" id="CAB14124">
    <property type="protein sequence ID" value="CAB14124"/>
    <property type="gene ID" value="BSU_22070"/>
</dbReference>
<dbReference type="GeneID" id="939064"/>
<dbReference type="KEGG" id="bsu:BSU22070"/>
<dbReference type="PATRIC" id="fig|224308.179.peg.2411"/>
<dbReference type="eggNOG" id="COG0503">
    <property type="taxonomic scope" value="Bacteria"/>
</dbReference>
<dbReference type="InParanoid" id="P42085"/>
<dbReference type="OrthoDB" id="9790678at2"/>
<dbReference type="PhylomeDB" id="P42085"/>
<dbReference type="BioCyc" id="BSUB:BSU22070-MONOMER"/>
<dbReference type="BRENDA" id="2.4.2.22">
    <property type="organism ID" value="658"/>
</dbReference>
<dbReference type="UniPathway" id="UPA00602">
    <property type="reaction ID" value="UER00658"/>
</dbReference>
<dbReference type="EvolutionaryTrace" id="P42085"/>
<dbReference type="PRO" id="PR:P42085"/>
<dbReference type="Proteomes" id="UP000001570">
    <property type="component" value="Chromosome"/>
</dbReference>
<dbReference type="GO" id="GO:0005737">
    <property type="term" value="C:cytoplasm"/>
    <property type="evidence" value="ECO:0007669"/>
    <property type="project" value="UniProtKB-SubCell"/>
</dbReference>
<dbReference type="GO" id="GO:0000310">
    <property type="term" value="F:xanthine phosphoribosyltransferase activity"/>
    <property type="evidence" value="ECO:0007669"/>
    <property type="project" value="UniProtKB-UniRule"/>
</dbReference>
<dbReference type="GO" id="GO:0006166">
    <property type="term" value="P:purine ribonucleoside salvage"/>
    <property type="evidence" value="ECO:0007669"/>
    <property type="project" value="UniProtKB-KW"/>
</dbReference>
<dbReference type="GO" id="GO:0046110">
    <property type="term" value="P:xanthine metabolic process"/>
    <property type="evidence" value="ECO:0007669"/>
    <property type="project" value="InterPro"/>
</dbReference>
<dbReference type="GO" id="GO:0032265">
    <property type="term" value="P:XMP salvage"/>
    <property type="evidence" value="ECO:0007669"/>
    <property type="project" value="UniProtKB-UniRule"/>
</dbReference>
<dbReference type="CDD" id="cd06223">
    <property type="entry name" value="PRTases_typeI"/>
    <property type="match status" value="1"/>
</dbReference>
<dbReference type="FunFam" id="3.40.50.2020:FF:000027">
    <property type="entry name" value="Xanthine phosphoribosyltransferase"/>
    <property type="match status" value="1"/>
</dbReference>
<dbReference type="Gene3D" id="3.40.50.2020">
    <property type="match status" value="1"/>
</dbReference>
<dbReference type="HAMAP" id="MF_01184">
    <property type="entry name" value="XPRTase"/>
    <property type="match status" value="1"/>
</dbReference>
<dbReference type="InterPro" id="IPR000836">
    <property type="entry name" value="PRibTrfase_dom"/>
</dbReference>
<dbReference type="InterPro" id="IPR029057">
    <property type="entry name" value="PRTase-like"/>
</dbReference>
<dbReference type="InterPro" id="IPR050118">
    <property type="entry name" value="Pur/Pyrimidine_PRTase"/>
</dbReference>
<dbReference type="InterPro" id="IPR010079">
    <property type="entry name" value="Xanthine_PRibTrfase"/>
</dbReference>
<dbReference type="NCBIfam" id="NF006671">
    <property type="entry name" value="PRK09219.1"/>
    <property type="match status" value="1"/>
</dbReference>
<dbReference type="NCBIfam" id="TIGR01744">
    <property type="entry name" value="XPRTase"/>
    <property type="match status" value="1"/>
</dbReference>
<dbReference type="PANTHER" id="PTHR43864">
    <property type="entry name" value="HYPOXANTHINE/GUANINE PHOSPHORIBOSYLTRANSFERASE"/>
    <property type="match status" value="1"/>
</dbReference>
<dbReference type="PANTHER" id="PTHR43864:SF1">
    <property type="entry name" value="XANTHINE PHOSPHORIBOSYLTRANSFERASE"/>
    <property type="match status" value="1"/>
</dbReference>
<dbReference type="Pfam" id="PF00156">
    <property type="entry name" value="Pribosyltran"/>
    <property type="match status" value="1"/>
</dbReference>
<dbReference type="SUPFAM" id="SSF53271">
    <property type="entry name" value="PRTase-like"/>
    <property type="match status" value="1"/>
</dbReference>
<keyword id="KW-0002">3D-structure</keyword>
<keyword id="KW-0963">Cytoplasm</keyword>
<keyword id="KW-0328">Glycosyltransferase</keyword>
<keyword id="KW-0660">Purine salvage</keyword>
<keyword id="KW-1185">Reference proteome</keyword>
<keyword id="KW-0808">Transferase</keyword>
<accession>P42085</accession>
<sequence length="194" mass="21038">MEALKRKIEEEGVVLSDQVLKVDSFLNHQIDPLLMQRIGDEFASRFAKDGITKIVTIESSGIAPAVMTGLKLGVPVVFARKHKSLTLTDNLLTASVYSFTKQTESQIAVSGTHLSDQDHVLIIDDFLANGQAAHGLVSIVKQAGASIAGIGIVIEKSFQPGRDELVKLGYRVESLARIQSLEEGKVSFVQEVHS</sequence>
<proteinExistence type="evidence at protein level"/>
<evidence type="ECO:0000269" key="1">
    <source>
    </source>
</evidence>
<evidence type="ECO:0000269" key="2">
    <source>
    </source>
</evidence>
<evidence type="ECO:0000269" key="3">
    <source ref="4"/>
</evidence>
<evidence type="ECO:0000305" key="4"/>
<evidence type="ECO:0007829" key="5">
    <source>
        <dbReference type="PDB" id="1Y0B"/>
    </source>
</evidence>
<feature type="chain" id="PRO_0000139697" description="Xanthine phosphoribosyltransferase">
    <location>
        <begin position="1"/>
        <end position="194"/>
    </location>
</feature>
<feature type="binding site">
    <location>
        <position position="20"/>
    </location>
    <ligand>
        <name>xanthine</name>
        <dbReference type="ChEBI" id="CHEBI:17712"/>
    </ligand>
</feature>
<feature type="binding site">
    <location>
        <position position="27"/>
    </location>
    <ligand>
        <name>xanthine</name>
        <dbReference type="ChEBI" id="CHEBI:17712"/>
    </ligand>
</feature>
<feature type="binding site">
    <location>
        <begin position="128"/>
        <end position="132"/>
    </location>
    <ligand>
        <name>5-phospho-alpha-D-ribose 1-diphosphate</name>
        <dbReference type="ChEBI" id="CHEBI:58017"/>
    </ligand>
</feature>
<feature type="binding site">
    <location>
        <position position="156"/>
    </location>
    <ligand>
        <name>xanthine</name>
        <dbReference type="ChEBI" id="CHEBI:17712"/>
    </ligand>
</feature>
<feature type="helix" evidence="5">
    <location>
        <begin position="1"/>
        <end position="11"/>
    </location>
</feature>
<feature type="strand" evidence="5">
    <location>
        <begin position="13"/>
        <end position="15"/>
    </location>
</feature>
<feature type="turn" evidence="5">
    <location>
        <begin position="16"/>
        <end position="18"/>
    </location>
</feature>
<feature type="strand" evidence="5">
    <location>
        <begin position="19"/>
        <end position="21"/>
    </location>
</feature>
<feature type="turn" evidence="5">
    <location>
        <begin position="23"/>
        <end position="26"/>
    </location>
</feature>
<feature type="strand" evidence="5">
    <location>
        <begin position="27"/>
        <end position="30"/>
    </location>
</feature>
<feature type="helix" evidence="5">
    <location>
        <begin position="32"/>
        <end position="45"/>
    </location>
</feature>
<feature type="turn" evidence="5">
    <location>
        <begin position="46"/>
        <end position="50"/>
    </location>
</feature>
<feature type="strand" evidence="5">
    <location>
        <begin position="53"/>
        <end position="57"/>
    </location>
</feature>
<feature type="turn" evidence="5">
    <location>
        <begin position="58"/>
        <end position="61"/>
    </location>
</feature>
<feature type="helix" evidence="5">
    <location>
        <begin position="62"/>
        <end position="72"/>
    </location>
</feature>
<feature type="strand" evidence="5">
    <location>
        <begin position="76"/>
        <end position="82"/>
    </location>
</feature>
<feature type="strand" evidence="5">
    <location>
        <begin position="89"/>
        <end position="98"/>
    </location>
</feature>
<feature type="turn" evidence="5">
    <location>
        <begin position="99"/>
        <end position="102"/>
    </location>
</feature>
<feature type="strand" evidence="5">
    <location>
        <begin position="103"/>
        <end position="110"/>
    </location>
</feature>
<feature type="helix" evidence="5">
    <location>
        <begin position="111"/>
        <end position="113"/>
    </location>
</feature>
<feature type="strand" evidence="5">
    <location>
        <begin position="119"/>
        <end position="129"/>
    </location>
</feature>
<feature type="helix" evidence="5">
    <location>
        <begin position="131"/>
        <end position="142"/>
    </location>
</feature>
<feature type="strand" evidence="5">
    <location>
        <begin position="146"/>
        <end position="156"/>
    </location>
</feature>
<feature type="helix" evidence="5">
    <location>
        <begin position="161"/>
        <end position="167"/>
    </location>
</feature>
<feature type="strand" evidence="5">
    <location>
        <begin position="172"/>
        <end position="180"/>
    </location>
</feature>
<feature type="turn" evidence="5">
    <location>
        <begin position="182"/>
        <end position="184"/>
    </location>
</feature>
<protein>
    <recommendedName>
        <fullName>Xanthine phosphoribosyltransferase</fullName>
        <shortName>XPRTase</shortName>
        <ecNumber>2.4.2.22</ecNumber>
    </recommendedName>
</protein>
<name>XPT_BACSU</name>
<gene>
    <name type="primary">xpt</name>
    <name type="ordered locus">BSU22070</name>
</gene>